<name>YGAC_ECOL6</name>
<reference key="1">
    <citation type="journal article" date="2002" name="Proc. Natl. Acad. Sci. U.S.A.">
        <title>Extensive mosaic structure revealed by the complete genome sequence of uropathogenic Escherichia coli.</title>
        <authorList>
            <person name="Welch R.A."/>
            <person name="Burland V."/>
            <person name="Plunkett G. III"/>
            <person name="Redford P."/>
            <person name="Roesch P."/>
            <person name="Rasko D."/>
            <person name="Buckles E.L."/>
            <person name="Liou S.-R."/>
            <person name="Boutin A."/>
            <person name="Hackett J."/>
            <person name="Stroud D."/>
            <person name="Mayhew G.F."/>
            <person name="Rose D.J."/>
            <person name="Zhou S."/>
            <person name="Schwartz D.C."/>
            <person name="Perna N.T."/>
            <person name="Mobley H.L.T."/>
            <person name="Donnenberg M.S."/>
            <person name="Blattner F.R."/>
        </authorList>
    </citation>
    <scope>NUCLEOTIDE SEQUENCE [LARGE SCALE GENOMIC DNA]</scope>
    <source>
        <strain>CFT073 / ATCC 700928 / UPEC</strain>
    </source>
</reference>
<gene>
    <name type="primary">ygaC</name>
    <name type="ordered locus">c3222</name>
</gene>
<keyword id="KW-1185">Reference proteome</keyword>
<proteinExistence type="predicted"/>
<sequence length="114" mass="13066">MYLRPDEVARVLEKVGFTVDVVTQKAYGYRRGENYVYVNREARMGRTALVIHPTLKERSSTLAEPASDIKTCDHYQQFPLYLAGERHEHYGIPHGFSSRVALERYLNGLFGEAS</sequence>
<dbReference type="EMBL" id="AE014075">
    <property type="protein sequence ID" value="AAN81674.1"/>
    <property type="molecule type" value="Genomic_DNA"/>
</dbReference>
<dbReference type="RefSeq" id="WP_000281320.1">
    <property type="nucleotide sequence ID" value="NZ_CP051263.1"/>
</dbReference>
<dbReference type="SMR" id="P0AD54"/>
<dbReference type="STRING" id="199310.c3222"/>
<dbReference type="KEGG" id="ecc:c3222"/>
<dbReference type="eggNOG" id="ENOG502ZQRR">
    <property type="taxonomic scope" value="Bacteria"/>
</dbReference>
<dbReference type="HOGENOM" id="CLU_2095143_0_0_6"/>
<dbReference type="BioCyc" id="ECOL199310:C3222-MONOMER"/>
<dbReference type="Proteomes" id="UP000001410">
    <property type="component" value="Chromosome"/>
</dbReference>
<dbReference type="Gene3D" id="3.90.1150.40">
    <property type="entry name" value="Protein of unknown function DUF2002"/>
    <property type="match status" value="1"/>
</dbReference>
<dbReference type="InterPro" id="IPR018994">
    <property type="entry name" value="DUF2002"/>
</dbReference>
<dbReference type="NCBIfam" id="NF007844">
    <property type="entry name" value="PRK10556.1-2"/>
    <property type="match status" value="1"/>
</dbReference>
<dbReference type="NCBIfam" id="NF007845">
    <property type="entry name" value="PRK10556.1-3"/>
    <property type="match status" value="1"/>
</dbReference>
<dbReference type="NCBIfam" id="NF007846">
    <property type="entry name" value="PRK10556.1-4"/>
    <property type="match status" value="1"/>
</dbReference>
<dbReference type="Pfam" id="PF09400">
    <property type="entry name" value="DUF2002"/>
    <property type="match status" value="1"/>
</dbReference>
<dbReference type="SUPFAM" id="SSF159894">
    <property type="entry name" value="YgaC/TfoX-N like"/>
    <property type="match status" value="1"/>
</dbReference>
<organism>
    <name type="scientific">Escherichia coli O6:H1 (strain CFT073 / ATCC 700928 / UPEC)</name>
    <dbReference type="NCBI Taxonomy" id="199310"/>
    <lineage>
        <taxon>Bacteria</taxon>
        <taxon>Pseudomonadati</taxon>
        <taxon>Pseudomonadota</taxon>
        <taxon>Gammaproteobacteria</taxon>
        <taxon>Enterobacterales</taxon>
        <taxon>Enterobacteriaceae</taxon>
        <taxon>Escherichia</taxon>
    </lineage>
</organism>
<protein>
    <recommendedName>
        <fullName>Uncharacterized protein YgaC</fullName>
    </recommendedName>
</protein>
<feature type="chain" id="PRO_0000169293" description="Uncharacterized protein YgaC">
    <location>
        <begin position="1"/>
        <end position="114"/>
    </location>
</feature>
<accession>P0AD54</accession>
<accession>P36931</accession>
<accession>P76627</accession>
<accession>P77024</accession>